<evidence type="ECO:0000269" key="1">
    <source>
    </source>
</evidence>
<evidence type="ECO:0000303" key="2">
    <source ref="1"/>
</evidence>
<evidence type="ECO:0000305" key="3"/>
<evidence type="ECO:0000312" key="4">
    <source>
        <dbReference type="HGNC" id="HGNC:30879"/>
    </source>
</evidence>
<evidence type="ECO:0007744" key="5">
    <source>
    </source>
</evidence>
<reference key="1">
    <citation type="submission" date="2004-04" db="EMBL/GenBank/DDBJ databases">
        <authorList>
            <person name="Zhou G."/>
            <person name="Zhong G."/>
            <person name="Ke R."/>
            <person name="Li H."/>
            <person name="Shen C."/>
            <person name="Lin L."/>
            <person name="Yang S."/>
        </authorList>
    </citation>
    <scope>NUCLEOTIDE SEQUENCE [MRNA] (ISOFORM 2)</scope>
</reference>
<reference key="2">
    <citation type="journal article" date="2004" name="Nat. Genet.">
        <title>Complete sequencing and characterization of 21,243 full-length human cDNAs.</title>
        <authorList>
            <person name="Ota T."/>
            <person name="Suzuki Y."/>
            <person name="Nishikawa T."/>
            <person name="Otsuki T."/>
            <person name="Sugiyama T."/>
            <person name="Irie R."/>
            <person name="Wakamatsu A."/>
            <person name="Hayashi K."/>
            <person name="Sato H."/>
            <person name="Nagai K."/>
            <person name="Kimura K."/>
            <person name="Makita H."/>
            <person name="Sekine M."/>
            <person name="Obayashi M."/>
            <person name="Nishi T."/>
            <person name="Shibahara T."/>
            <person name="Tanaka T."/>
            <person name="Ishii S."/>
            <person name="Yamamoto J."/>
            <person name="Saito K."/>
            <person name="Kawai Y."/>
            <person name="Isono Y."/>
            <person name="Nakamura Y."/>
            <person name="Nagahari K."/>
            <person name="Murakami K."/>
            <person name="Yasuda T."/>
            <person name="Iwayanagi T."/>
            <person name="Wagatsuma M."/>
            <person name="Shiratori A."/>
            <person name="Sudo H."/>
            <person name="Hosoiri T."/>
            <person name="Kaku Y."/>
            <person name="Kodaira H."/>
            <person name="Kondo H."/>
            <person name="Sugawara M."/>
            <person name="Takahashi M."/>
            <person name="Kanda K."/>
            <person name="Yokoi T."/>
            <person name="Furuya T."/>
            <person name="Kikkawa E."/>
            <person name="Omura Y."/>
            <person name="Abe K."/>
            <person name="Kamihara K."/>
            <person name="Katsuta N."/>
            <person name="Sato K."/>
            <person name="Tanikawa M."/>
            <person name="Yamazaki M."/>
            <person name="Ninomiya K."/>
            <person name="Ishibashi T."/>
            <person name="Yamashita H."/>
            <person name="Murakawa K."/>
            <person name="Fujimori K."/>
            <person name="Tanai H."/>
            <person name="Kimata M."/>
            <person name="Watanabe M."/>
            <person name="Hiraoka S."/>
            <person name="Chiba Y."/>
            <person name="Ishida S."/>
            <person name="Ono Y."/>
            <person name="Takiguchi S."/>
            <person name="Watanabe S."/>
            <person name="Yosida M."/>
            <person name="Hotuta T."/>
            <person name="Kusano J."/>
            <person name="Kanehori K."/>
            <person name="Takahashi-Fujii A."/>
            <person name="Hara H."/>
            <person name="Tanase T.-O."/>
            <person name="Nomura Y."/>
            <person name="Togiya S."/>
            <person name="Komai F."/>
            <person name="Hara R."/>
            <person name="Takeuchi K."/>
            <person name="Arita M."/>
            <person name="Imose N."/>
            <person name="Musashino K."/>
            <person name="Yuuki H."/>
            <person name="Oshima A."/>
            <person name="Sasaki N."/>
            <person name="Aotsuka S."/>
            <person name="Yoshikawa Y."/>
            <person name="Matsunawa H."/>
            <person name="Ichihara T."/>
            <person name="Shiohata N."/>
            <person name="Sano S."/>
            <person name="Moriya S."/>
            <person name="Momiyama H."/>
            <person name="Satoh N."/>
            <person name="Takami S."/>
            <person name="Terashima Y."/>
            <person name="Suzuki O."/>
            <person name="Nakagawa S."/>
            <person name="Senoh A."/>
            <person name="Mizoguchi H."/>
            <person name="Goto Y."/>
            <person name="Shimizu F."/>
            <person name="Wakebe H."/>
            <person name="Hishigaki H."/>
            <person name="Watanabe T."/>
            <person name="Sugiyama A."/>
            <person name="Takemoto M."/>
            <person name="Kawakami B."/>
            <person name="Yamazaki M."/>
            <person name="Watanabe K."/>
            <person name="Kumagai A."/>
            <person name="Itakura S."/>
            <person name="Fukuzumi Y."/>
            <person name="Fujimori Y."/>
            <person name="Komiyama M."/>
            <person name="Tashiro H."/>
            <person name="Tanigami A."/>
            <person name="Fujiwara T."/>
            <person name="Ono T."/>
            <person name="Yamada K."/>
            <person name="Fujii Y."/>
            <person name="Ozaki K."/>
            <person name="Hirao M."/>
            <person name="Ohmori Y."/>
            <person name="Kawabata A."/>
            <person name="Hikiji T."/>
            <person name="Kobatake N."/>
            <person name="Inagaki H."/>
            <person name="Ikema Y."/>
            <person name="Okamoto S."/>
            <person name="Okitani R."/>
            <person name="Kawakami T."/>
            <person name="Noguchi S."/>
            <person name="Itoh T."/>
            <person name="Shigeta K."/>
            <person name="Senba T."/>
            <person name="Matsumura K."/>
            <person name="Nakajima Y."/>
            <person name="Mizuno T."/>
            <person name="Morinaga M."/>
            <person name="Sasaki M."/>
            <person name="Togashi T."/>
            <person name="Oyama M."/>
            <person name="Hata H."/>
            <person name="Watanabe M."/>
            <person name="Komatsu T."/>
            <person name="Mizushima-Sugano J."/>
            <person name="Satoh T."/>
            <person name="Shirai Y."/>
            <person name="Takahashi Y."/>
            <person name="Nakagawa K."/>
            <person name="Okumura K."/>
            <person name="Nagase T."/>
            <person name="Nomura N."/>
            <person name="Kikuchi H."/>
            <person name="Masuho Y."/>
            <person name="Yamashita R."/>
            <person name="Nakai K."/>
            <person name="Yada T."/>
            <person name="Nakamura Y."/>
            <person name="Ohara O."/>
            <person name="Isogai T."/>
            <person name="Sugano S."/>
        </authorList>
    </citation>
    <scope>NUCLEOTIDE SEQUENCE [LARGE SCALE MRNA] (ISOFORM 1)</scope>
</reference>
<reference key="3">
    <citation type="journal article" date="2006" name="Nature">
        <title>The finished DNA sequence of human chromosome 12.</title>
        <authorList>
            <person name="Scherer S.E."/>
            <person name="Muzny D.M."/>
            <person name="Buhay C.J."/>
            <person name="Chen R."/>
            <person name="Cree A."/>
            <person name="Ding Y."/>
            <person name="Dugan-Rocha S."/>
            <person name="Gill R."/>
            <person name="Gunaratne P."/>
            <person name="Harris R.A."/>
            <person name="Hawes A.C."/>
            <person name="Hernandez J."/>
            <person name="Hodgson A.V."/>
            <person name="Hume J."/>
            <person name="Jackson A."/>
            <person name="Khan Z.M."/>
            <person name="Kovar-Smith C."/>
            <person name="Lewis L.R."/>
            <person name="Lozado R.J."/>
            <person name="Metzker M.L."/>
            <person name="Milosavljevic A."/>
            <person name="Miner G.R."/>
            <person name="Montgomery K.T."/>
            <person name="Morgan M.B."/>
            <person name="Nazareth L.V."/>
            <person name="Scott G."/>
            <person name="Sodergren E."/>
            <person name="Song X.-Z."/>
            <person name="Steffen D."/>
            <person name="Lovering R.C."/>
            <person name="Wheeler D.A."/>
            <person name="Worley K.C."/>
            <person name="Yuan Y."/>
            <person name="Zhang Z."/>
            <person name="Adams C.Q."/>
            <person name="Ansari-Lari M.A."/>
            <person name="Ayele M."/>
            <person name="Brown M.J."/>
            <person name="Chen G."/>
            <person name="Chen Z."/>
            <person name="Clerc-Blankenburg K.P."/>
            <person name="Davis C."/>
            <person name="Delgado O."/>
            <person name="Dinh H.H."/>
            <person name="Draper H."/>
            <person name="Gonzalez-Garay M.L."/>
            <person name="Havlak P."/>
            <person name="Jackson L.R."/>
            <person name="Jacob L.S."/>
            <person name="Kelly S.H."/>
            <person name="Li L."/>
            <person name="Li Z."/>
            <person name="Liu J."/>
            <person name="Liu W."/>
            <person name="Lu J."/>
            <person name="Maheshwari M."/>
            <person name="Nguyen B.-V."/>
            <person name="Okwuonu G.O."/>
            <person name="Pasternak S."/>
            <person name="Perez L.M."/>
            <person name="Plopper F.J.H."/>
            <person name="Santibanez J."/>
            <person name="Shen H."/>
            <person name="Tabor P.E."/>
            <person name="Verduzco D."/>
            <person name="Waldron L."/>
            <person name="Wang Q."/>
            <person name="Williams G.A."/>
            <person name="Zhang J."/>
            <person name="Zhou J."/>
            <person name="Allen C.C."/>
            <person name="Amin A.G."/>
            <person name="Anyalebechi V."/>
            <person name="Bailey M."/>
            <person name="Barbaria J.A."/>
            <person name="Bimage K.E."/>
            <person name="Bryant N.P."/>
            <person name="Burch P.E."/>
            <person name="Burkett C.E."/>
            <person name="Burrell K.L."/>
            <person name="Calderon E."/>
            <person name="Cardenas V."/>
            <person name="Carter K."/>
            <person name="Casias K."/>
            <person name="Cavazos I."/>
            <person name="Cavazos S.R."/>
            <person name="Ceasar H."/>
            <person name="Chacko J."/>
            <person name="Chan S.N."/>
            <person name="Chavez D."/>
            <person name="Christopoulos C."/>
            <person name="Chu J."/>
            <person name="Cockrell R."/>
            <person name="Cox C.D."/>
            <person name="Dang M."/>
            <person name="Dathorne S.R."/>
            <person name="David R."/>
            <person name="Davis C.M."/>
            <person name="Davy-Carroll L."/>
            <person name="Deshazo D.R."/>
            <person name="Donlin J.E."/>
            <person name="D'Souza L."/>
            <person name="Eaves K.A."/>
            <person name="Egan A."/>
            <person name="Emery-Cohen A.J."/>
            <person name="Escotto M."/>
            <person name="Flagg N."/>
            <person name="Forbes L.D."/>
            <person name="Gabisi A.M."/>
            <person name="Garza M."/>
            <person name="Hamilton C."/>
            <person name="Henderson N."/>
            <person name="Hernandez O."/>
            <person name="Hines S."/>
            <person name="Hogues M.E."/>
            <person name="Huang M."/>
            <person name="Idlebird D.G."/>
            <person name="Johnson R."/>
            <person name="Jolivet A."/>
            <person name="Jones S."/>
            <person name="Kagan R."/>
            <person name="King L.M."/>
            <person name="Leal B."/>
            <person name="Lebow H."/>
            <person name="Lee S."/>
            <person name="LeVan J.M."/>
            <person name="Lewis L.C."/>
            <person name="London P."/>
            <person name="Lorensuhewa L.M."/>
            <person name="Loulseged H."/>
            <person name="Lovett D.A."/>
            <person name="Lucier A."/>
            <person name="Lucier R.L."/>
            <person name="Ma J."/>
            <person name="Madu R.C."/>
            <person name="Mapua P."/>
            <person name="Martindale A.D."/>
            <person name="Martinez E."/>
            <person name="Massey E."/>
            <person name="Mawhiney S."/>
            <person name="Meador M.G."/>
            <person name="Mendez S."/>
            <person name="Mercado C."/>
            <person name="Mercado I.C."/>
            <person name="Merritt C.E."/>
            <person name="Miner Z.L."/>
            <person name="Minja E."/>
            <person name="Mitchell T."/>
            <person name="Mohabbat F."/>
            <person name="Mohabbat K."/>
            <person name="Montgomery B."/>
            <person name="Moore N."/>
            <person name="Morris S."/>
            <person name="Munidasa M."/>
            <person name="Ngo R.N."/>
            <person name="Nguyen N.B."/>
            <person name="Nickerson E."/>
            <person name="Nwaokelemeh O.O."/>
            <person name="Nwokenkwo S."/>
            <person name="Obregon M."/>
            <person name="Oguh M."/>
            <person name="Oragunye N."/>
            <person name="Oviedo R.J."/>
            <person name="Parish B.J."/>
            <person name="Parker D.N."/>
            <person name="Parrish J."/>
            <person name="Parks K.L."/>
            <person name="Paul H.A."/>
            <person name="Payton B.A."/>
            <person name="Perez A."/>
            <person name="Perrin W."/>
            <person name="Pickens A."/>
            <person name="Primus E.L."/>
            <person name="Pu L.-L."/>
            <person name="Puazo M."/>
            <person name="Quiles M.M."/>
            <person name="Quiroz J.B."/>
            <person name="Rabata D."/>
            <person name="Reeves K."/>
            <person name="Ruiz S.J."/>
            <person name="Shao H."/>
            <person name="Sisson I."/>
            <person name="Sonaike T."/>
            <person name="Sorelle R.P."/>
            <person name="Sutton A.E."/>
            <person name="Svatek A.F."/>
            <person name="Svetz L.A."/>
            <person name="Tamerisa K.S."/>
            <person name="Taylor T.R."/>
            <person name="Teague B."/>
            <person name="Thomas N."/>
            <person name="Thorn R.D."/>
            <person name="Trejos Z.Y."/>
            <person name="Trevino B.K."/>
            <person name="Ukegbu O.N."/>
            <person name="Urban J.B."/>
            <person name="Vasquez L.I."/>
            <person name="Vera V.A."/>
            <person name="Villasana D.M."/>
            <person name="Wang L."/>
            <person name="Ward-Moore S."/>
            <person name="Warren J.T."/>
            <person name="Wei X."/>
            <person name="White F."/>
            <person name="Williamson A.L."/>
            <person name="Wleczyk R."/>
            <person name="Wooden H.S."/>
            <person name="Wooden S.H."/>
            <person name="Yen J."/>
            <person name="Yoon L."/>
            <person name="Yoon V."/>
            <person name="Zorrilla S.E."/>
            <person name="Nelson D."/>
            <person name="Kucherlapati R."/>
            <person name="Weinstock G."/>
            <person name="Gibbs R.A."/>
        </authorList>
    </citation>
    <scope>NUCLEOTIDE SEQUENCE [LARGE SCALE GENOMIC DNA]</scope>
</reference>
<reference key="4">
    <citation type="submission" date="2005-09" db="EMBL/GenBank/DDBJ databases">
        <authorList>
            <person name="Mural R.J."/>
            <person name="Istrail S."/>
            <person name="Sutton G.G."/>
            <person name="Florea L."/>
            <person name="Halpern A.L."/>
            <person name="Mobarry C.M."/>
            <person name="Lippert R."/>
            <person name="Walenz B."/>
            <person name="Shatkay H."/>
            <person name="Dew I."/>
            <person name="Miller J.R."/>
            <person name="Flanigan M.J."/>
            <person name="Edwards N.J."/>
            <person name="Bolanos R."/>
            <person name="Fasulo D."/>
            <person name="Halldorsson B.V."/>
            <person name="Hannenhalli S."/>
            <person name="Turner R."/>
            <person name="Yooseph S."/>
            <person name="Lu F."/>
            <person name="Nusskern D.R."/>
            <person name="Shue B.C."/>
            <person name="Zheng X.H."/>
            <person name="Zhong F."/>
            <person name="Delcher A.L."/>
            <person name="Huson D.H."/>
            <person name="Kravitz S.A."/>
            <person name="Mouchard L."/>
            <person name="Reinert K."/>
            <person name="Remington K.A."/>
            <person name="Clark A.G."/>
            <person name="Waterman M.S."/>
            <person name="Eichler E.E."/>
            <person name="Adams M.D."/>
            <person name="Hunkapiller M.W."/>
            <person name="Myers E.W."/>
            <person name="Venter J.C."/>
        </authorList>
    </citation>
    <scope>NUCLEOTIDE SEQUENCE [LARGE SCALE GENOMIC DNA]</scope>
</reference>
<reference key="5">
    <citation type="journal article" date="2004" name="Genome Res.">
        <title>The status, quality, and expansion of the NIH full-length cDNA project: the Mammalian Gene Collection (MGC).</title>
        <authorList>
            <consortium name="The MGC Project Team"/>
        </authorList>
    </citation>
    <scope>NUCLEOTIDE SEQUENCE [LARGE SCALE MRNA] (ISOFORM 1)</scope>
    <source>
        <tissue>Ovary</tissue>
    </source>
</reference>
<reference key="6">
    <citation type="journal article" date="2011" name="BMC Syst. Biol.">
        <title>Initial characterization of the human central proteome.</title>
        <authorList>
            <person name="Burkard T.R."/>
            <person name="Planyavsky M."/>
            <person name="Kaupe I."/>
            <person name="Breitwieser F.P."/>
            <person name="Buerckstuemmer T."/>
            <person name="Bennett K.L."/>
            <person name="Superti-Furga G."/>
            <person name="Colinge J."/>
        </authorList>
    </citation>
    <scope>IDENTIFICATION BY MASS SPECTROMETRY [LARGE SCALE ANALYSIS]</scope>
</reference>
<reference key="7">
    <citation type="journal article" date="2013" name="J. Proteome Res.">
        <title>Toward a comprehensive characterization of a human cancer cell phosphoproteome.</title>
        <authorList>
            <person name="Zhou H."/>
            <person name="Di Palma S."/>
            <person name="Preisinger C."/>
            <person name="Peng M."/>
            <person name="Polat A.N."/>
            <person name="Heck A.J."/>
            <person name="Mohammed S."/>
        </authorList>
    </citation>
    <scope>PHOSPHORYLATION [LARGE SCALE ANALYSIS] AT SER-104 AND SER-220</scope>
    <scope>IDENTIFICATION BY MASS SPECTROMETRY [LARGE SCALE ANALYSIS]</scope>
    <source>
        <tissue>Cervix carcinoma</tissue>
        <tissue>Erythroleukemia</tissue>
    </source>
</reference>
<reference key="8">
    <citation type="journal article" date="2017" name="Nature">
        <title>KICSTOR recruits GATOR1 to the lysosome and is necessary for nutrients to regulate mTORC1.</title>
        <authorList>
            <person name="Wolfson R.L."/>
            <person name="Chantranupong L."/>
            <person name="Wyant G.A."/>
            <person name="Gu X."/>
            <person name="Orozco J.M."/>
            <person name="Shen K."/>
            <person name="Condon K.J."/>
            <person name="Petri S."/>
            <person name="Kedir J."/>
            <person name="Scaria S.M."/>
            <person name="Abu-Remaileh M."/>
            <person name="Frankel W.N."/>
            <person name="Sabatini D.M."/>
        </authorList>
    </citation>
    <scope>FUNCTION</scope>
    <scope>IDENTIFICATION IN THE KICSTOR COMPLEX</scope>
    <scope>SUBCELLULAR LOCATION</scope>
</reference>
<accession>Q969R8</accession>
<accession>A8K4Z5</accession>
<accession>D3DUQ2</accession>
<accession>Q6PKU5</accession>
<accession>Q96SX6</accession>
<organism>
    <name type="scientific">Homo sapiens</name>
    <name type="common">Human</name>
    <dbReference type="NCBI Taxonomy" id="9606"/>
    <lineage>
        <taxon>Eukaryota</taxon>
        <taxon>Metazoa</taxon>
        <taxon>Chordata</taxon>
        <taxon>Craniata</taxon>
        <taxon>Vertebrata</taxon>
        <taxon>Euteleostomi</taxon>
        <taxon>Mammalia</taxon>
        <taxon>Eutheria</taxon>
        <taxon>Euarchontoglires</taxon>
        <taxon>Primates</taxon>
        <taxon>Haplorrhini</taxon>
        <taxon>Catarrhini</taxon>
        <taxon>Hominidae</taxon>
        <taxon>Homo</taxon>
    </lineage>
</organism>
<feature type="chain" id="PRO_0000289292" description="KICSTOR complex protein ITFG2">
    <location>
        <begin position="1"/>
        <end position="447"/>
    </location>
</feature>
<feature type="repeat" description="FG-GAP 1; atypical">
    <location>
        <begin position="19"/>
        <end position="48"/>
    </location>
</feature>
<feature type="repeat" description="FG-GAP 2; atypical">
    <location>
        <begin position="126"/>
        <end position="155"/>
    </location>
</feature>
<feature type="modified residue" description="Phosphoserine" evidence="5">
    <location>
        <position position="104"/>
    </location>
</feature>
<feature type="modified residue" description="Phosphoserine" evidence="5">
    <location>
        <position position="220"/>
    </location>
</feature>
<feature type="splice variant" id="VSP_055985" description="In isoform 2." evidence="2">
    <original>DGDGCRELVVGY</original>
    <variation>GGHAYLCRQPGE</variation>
    <location>
        <begin position="136"/>
        <end position="147"/>
    </location>
</feature>
<feature type="splice variant" id="VSP_055986" description="In isoform 2." evidence="2">
    <location>
        <begin position="148"/>
        <end position="447"/>
    </location>
</feature>
<feature type="sequence conflict" description="In Ref. 2; BAB55145." evidence="3" ref="2">
    <original>V</original>
    <variation>A</variation>
    <location>
        <position position="68"/>
    </location>
</feature>
<proteinExistence type="evidence at protein level"/>
<name>ITFG2_HUMAN</name>
<protein>
    <recommendedName>
        <fullName evidence="3">KICSTOR complex protein ITFG2</fullName>
    </recommendedName>
    <alternativeName>
        <fullName evidence="4">Integrin-alpha FG-GAP repeat-containing protein 2</fullName>
    </alternativeName>
</protein>
<sequence length="447" mass="49313">MRSVSYVQRVALEFSGSLFPHAICLGDVDNDTLNELVVGDTSGKVSVYKNDDSRPWLTCSCQGMLTCVGVGDVCNKGKNLLVAVSAEGWFHLFDLTPAKVLDASGHHETLIGEEQRPVFKQHIPANTKVMLISDIDGDGCRELVVGYTDRVVRAFRWEELGEGPEHLTGQLVSLKKWMLEGQVDSLSVTLGPLGLPELMVSQPGCAYAILLCTWKKDTGSPPASEGPTDGSRETPAARDVVLHQTSGRIHNKNVSTHLIGNIKQGHGTESSGSGLFALCTLDGTLKLMEEMEEADKLLWSVQVDHQLFALEKLDVTGNGHEEVVACAWDGQTYIIDHNRTVVRFQVDENIRAFCAGLYACKEGRNSPCLVYVTFNQKIYVYWEVQLERMESTNLVKLLETKPEYHSLLQELGVDPDDLPVTRALLHQTLYHPDQPPQCAPSSLQDPT</sequence>
<keyword id="KW-0025">Alternative splicing</keyword>
<keyword id="KW-0458">Lysosome</keyword>
<keyword id="KW-0472">Membrane</keyword>
<keyword id="KW-0597">Phosphoprotein</keyword>
<keyword id="KW-1267">Proteomics identification</keyword>
<keyword id="KW-1185">Reference proteome</keyword>
<keyword id="KW-0677">Repeat</keyword>
<gene>
    <name evidence="4" type="primary">ITFG2</name>
</gene>
<comment type="function">
    <text evidence="1">As part of the KICSTOR complex functions in the amino acid-sensing branch of the TORC1 signaling pathway. Recruits, in an amino acid-independent manner, the GATOR1 complex to the lysosomal membranes and allows its interaction with GATOR2 and the RAG GTPases. Functions upstream of the RAG GTPases and is required to negatively regulate mTORC1 signaling in absence of amino acids. In absence of the KICSTOR complex mTORC1 is constitutively localized to the lysosome and activated. The KICSTOR complex is also probably involved in the regulation of mTORC1 by glucose.</text>
</comment>
<comment type="subunit">
    <text evidence="1">Part of the KICSTOR complex composed of KPTN, ITFG2, KICS2 and SZT2. SZT2 probably serves as a link between the other three proteins in the KICSTOR complex and may mediate the direct interaction with the GATOR complex via GATOR1. The KICSTOR complex interacts directly with the GATOR1 complex and most probably indirectly with the GATOR2 complex in an amino acid-independent manner.</text>
</comment>
<comment type="interaction">
    <interactant intactId="EBI-723695">
        <id>Q969R8</id>
    </interactant>
    <interactant intactId="EBI-16170539">
        <id>Q5T2D3</id>
        <label>OTUD3</label>
    </interactant>
    <organismsDiffer>false</organismsDiffer>
    <experiments>3</experiments>
</comment>
<comment type="subcellular location">
    <subcellularLocation>
        <location evidence="1">Lysosome membrane</location>
    </subcellularLocation>
    <text evidence="1">Localization to lysosomes is amino acid-independent.</text>
</comment>
<comment type="alternative products">
    <event type="alternative splicing"/>
    <isoform>
        <id>Q969R8-1</id>
        <name>1</name>
        <sequence type="displayed"/>
    </isoform>
    <isoform>
        <id>Q969R8-2</id>
        <name>2</name>
        <sequence type="described" ref="VSP_055985 VSP_055986"/>
    </isoform>
</comment>
<dbReference type="EMBL" id="AY599883">
    <property type="protein sequence ID" value="AAT09136.1"/>
    <property type="molecule type" value="mRNA"/>
</dbReference>
<dbReference type="EMBL" id="AK027483">
    <property type="protein sequence ID" value="BAB55145.1"/>
    <property type="molecule type" value="mRNA"/>
</dbReference>
<dbReference type="EMBL" id="AK291110">
    <property type="protein sequence ID" value="BAF83799.1"/>
    <property type="molecule type" value="mRNA"/>
</dbReference>
<dbReference type="EMBL" id="AC005841">
    <property type="status" value="NOT_ANNOTATED_CDS"/>
    <property type="molecule type" value="Genomic_DNA"/>
</dbReference>
<dbReference type="EMBL" id="CH471116">
    <property type="protein sequence ID" value="EAW88886.1"/>
    <property type="molecule type" value="Genomic_DNA"/>
</dbReference>
<dbReference type="EMBL" id="CH471116">
    <property type="protein sequence ID" value="EAW88887.1"/>
    <property type="molecule type" value="Genomic_DNA"/>
</dbReference>
<dbReference type="EMBL" id="BC006552">
    <property type="protein sequence ID" value="AAH06552.1"/>
    <property type="molecule type" value="mRNA"/>
</dbReference>
<dbReference type="EMBL" id="BC013399">
    <property type="protein sequence ID" value="AAH13399.1"/>
    <property type="molecule type" value="mRNA"/>
</dbReference>
<dbReference type="CCDS" id="CCDS8513.1">
    <molecule id="Q969R8-1"/>
</dbReference>
<dbReference type="RefSeq" id="NP_060933.3">
    <molecule id="Q969R8-1"/>
    <property type="nucleotide sequence ID" value="NM_018463.3"/>
</dbReference>
<dbReference type="BioGRID" id="120948">
    <property type="interactions" value="29"/>
</dbReference>
<dbReference type="ComplexPortal" id="CPX-6229">
    <property type="entry name" value="KICSTOR complex"/>
</dbReference>
<dbReference type="CORUM" id="Q969R8"/>
<dbReference type="FunCoup" id="Q969R8">
    <property type="interactions" value="535"/>
</dbReference>
<dbReference type="IntAct" id="Q969R8">
    <property type="interactions" value="20"/>
</dbReference>
<dbReference type="MINT" id="Q969R8"/>
<dbReference type="STRING" id="9606.ENSP00000228799"/>
<dbReference type="GlyGen" id="Q969R8">
    <property type="glycosylation" value="1 site"/>
</dbReference>
<dbReference type="iPTMnet" id="Q969R8"/>
<dbReference type="PhosphoSitePlus" id="Q969R8"/>
<dbReference type="BioMuta" id="ITFG2"/>
<dbReference type="DMDM" id="74731058"/>
<dbReference type="jPOST" id="Q969R8"/>
<dbReference type="MassIVE" id="Q969R8"/>
<dbReference type="PaxDb" id="9606-ENSP00000228799"/>
<dbReference type="PeptideAtlas" id="Q969R8"/>
<dbReference type="ProteomicsDB" id="67246"/>
<dbReference type="ProteomicsDB" id="75823">
    <molecule id="Q969R8-1"/>
</dbReference>
<dbReference type="Pumba" id="Q969R8"/>
<dbReference type="Antibodypedia" id="22171">
    <property type="antibodies" value="286 antibodies from 21 providers"/>
</dbReference>
<dbReference type="DNASU" id="55846"/>
<dbReference type="Ensembl" id="ENST00000228799.7">
    <molecule id="Q969R8-1"/>
    <property type="protein sequence ID" value="ENSP00000228799.2"/>
    <property type="gene ID" value="ENSG00000111203.13"/>
</dbReference>
<dbReference type="Ensembl" id="ENST00000540929.5">
    <molecule id="Q969R8-2"/>
    <property type="protein sequence ID" value="ENSP00000443329.1"/>
    <property type="gene ID" value="ENSG00000111203.13"/>
</dbReference>
<dbReference type="Ensembl" id="ENST00000644517.1">
    <molecule id="Q969R8-2"/>
    <property type="protein sequence ID" value="ENSP00000496068.1"/>
    <property type="gene ID" value="ENSG00000111203.13"/>
</dbReference>
<dbReference type="GeneID" id="55846"/>
<dbReference type="KEGG" id="hsa:55846"/>
<dbReference type="MANE-Select" id="ENST00000228799.7">
    <property type="protein sequence ID" value="ENSP00000228799.2"/>
    <property type="RefSeq nucleotide sequence ID" value="NM_018463.4"/>
    <property type="RefSeq protein sequence ID" value="NP_060933.3"/>
</dbReference>
<dbReference type="UCSC" id="uc001qlb.3">
    <molecule id="Q969R8-1"/>
    <property type="organism name" value="human"/>
</dbReference>
<dbReference type="AGR" id="HGNC:30879"/>
<dbReference type="CTD" id="55846"/>
<dbReference type="DisGeNET" id="55846"/>
<dbReference type="GeneCards" id="ITFG2"/>
<dbReference type="HGNC" id="HGNC:30879">
    <property type="gene designation" value="ITFG2"/>
</dbReference>
<dbReference type="HPA" id="ENSG00000111203">
    <property type="expression patterns" value="Low tissue specificity"/>
</dbReference>
<dbReference type="MIM" id="617421">
    <property type="type" value="gene"/>
</dbReference>
<dbReference type="neXtProt" id="NX_Q969R8"/>
<dbReference type="OpenTargets" id="ENSG00000111203"/>
<dbReference type="PharmGKB" id="PA143485507"/>
<dbReference type="VEuPathDB" id="HostDB:ENSG00000111203"/>
<dbReference type="eggNOG" id="ENOG502QUBC">
    <property type="taxonomic scope" value="Eukaryota"/>
</dbReference>
<dbReference type="GeneTree" id="ENSGT00390000005378"/>
<dbReference type="HOGENOM" id="CLU_021730_0_0_1"/>
<dbReference type="InParanoid" id="Q969R8"/>
<dbReference type="OMA" id="LNKWECA"/>
<dbReference type="OrthoDB" id="9996127at2759"/>
<dbReference type="PAN-GO" id="Q969R8">
    <property type="GO annotations" value="2 GO annotations based on evolutionary models"/>
</dbReference>
<dbReference type="PhylomeDB" id="Q969R8"/>
<dbReference type="TreeFam" id="TF329010"/>
<dbReference type="PathwayCommons" id="Q969R8"/>
<dbReference type="Reactome" id="R-HSA-9639288">
    <property type="pathway name" value="Amino acids regulate mTORC1"/>
</dbReference>
<dbReference type="SignaLink" id="Q969R8"/>
<dbReference type="BioGRID-ORCS" id="55846">
    <property type="hits" value="21 hits in 1157 CRISPR screens"/>
</dbReference>
<dbReference type="ChiTaRS" id="ITFG2">
    <property type="organism name" value="human"/>
</dbReference>
<dbReference type="GenomeRNAi" id="55846"/>
<dbReference type="Pharos" id="Q969R8">
    <property type="development level" value="Tbio"/>
</dbReference>
<dbReference type="PRO" id="PR:Q969R8"/>
<dbReference type="Proteomes" id="UP000005640">
    <property type="component" value="Chromosome 12"/>
</dbReference>
<dbReference type="RNAct" id="Q969R8">
    <property type="molecule type" value="protein"/>
</dbReference>
<dbReference type="Bgee" id="ENSG00000111203">
    <property type="expression patterns" value="Expressed in right lobe of thyroid gland and 168 other cell types or tissues"/>
</dbReference>
<dbReference type="ExpressionAtlas" id="Q969R8">
    <property type="expression patterns" value="baseline and differential"/>
</dbReference>
<dbReference type="GO" id="GO:0005829">
    <property type="term" value="C:cytosol"/>
    <property type="evidence" value="ECO:0007669"/>
    <property type="project" value="Ensembl"/>
</dbReference>
<dbReference type="GO" id="GO:0005794">
    <property type="term" value="C:Golgi apparatus"/>
    <property type="evidence" value="ECO:0000314"/>
    <property type="project" value="HPA"/>
</dbReference>
<dbReference type="GO" id="GO:0043231">
    <property type="term" value="C:intracellular membrane-bounded organelle"/>
    <property type="evidence" value="ECO:0000314"/>
    <property type="project" value="HPA"/>
</dbReference>
<dbReference type="GO" id="GO:0140007">
    <property type="term" value="C:KICSTOR complex"/>
    <property type="evidence" value="ECO:0000314"/>
    <property type="project" value="UniProtKB"/>
</dbReference>
<dbReference type="GO" id="GO:0005765">
    <property type="term" value="C:lysosomal membrane"/>
    <property type="evidence" value="ECO:0000314"/>
    <property type="project" value="UniProtKB"/>
</dbReference>
<dbReference type="GO" id="GO:0005654">
    <property type="term" value="C:nucleoplasm"/>
    <property type="evidence" value="ECO:0007669"/>
    <property type="project" value="Ensembl"/>
</dbReference>
<dbReference type="GO" id="GO:0034198">
    <property type="term" value="P:cellular response to amino acid starvation"/>
    <property type="evidence" value="ECO:0000315"/>
    <property type="project" value="UniProtKB"/>
</dbReference>
<dbReference type="GO" id="GO:0042149">
    <property type="term" value="P:cellular response to glucose starvation"/>
    <property type="evidence" value="ECO:0000315"/>
    <property type="project" value="UniProtKB"/>
</dbReference>
<dbReference type="GO" id="GO:0002314">
    <property type="term" value="P:germinal center B cell differentiation"/>
    <property type="evidence" value="ECO:0007669"/>
    <property type="project" value="Ensembl"/>
</dbReference>
<dbReference type="GO" id="GO:1904262">
    <property type="term" value="P:negative regulation of TORC1 signaling"/>
    <property type="evidence" value="ECO:0000315"/>
    <property type="project" value="UniProtKB"/>
</dbReference>
<dbReference type="GO" id="GO:0032006">
    <property type="term" value="P:regulation of TOR signaling"/>
    <property type="evidence" value="ECO:0000318"/>
    <property type="project" value="GO_Central"/>
</dbReference>
<dbReference type="Gene3D" id="2.130.10.130">
    <property type="entry name" value="Integrin alpha, N-terminal"/>
    <property type="match status" value="1"/>
</dbReference>
<dbReference type="InterPro" id="IPR028994">
    <property type="entry name" value="Integrin_alpha_N"/>
</dbReference>
<dbReference type="InterPro" id="IPR031793">
    <property type="entry name" value="KICSTOR_ITFG2"/>
</dbReference>
<dbReference type="InterPro" id="IPR036322">
    <property type="entry name" value="WD40_repeat_dom_sf"/>
</dbReference>
<dbReference type="PANTHER" id="PTHR16317">
    <property type="entry name" value="INTEGRIN ALPHA REPEAT DOMAIN-CONTAINING"/>
    <property type="match status" value="1"/>
</dbReference>
<dbReference type="PANTHER" id="PTHR16317:SF1">
    <property type="entry name" value="KICSTOR COMPLEX PROTEIN ITFG2"/>
    <property type="match status" value="1"/>
</dbReference>
<dbReference type="Pfam" id="PF15907">
    <property type="entry name" value="Itfg2"/>
    <property type="match status" value="1"/>
</dbReference>
<dbReference type="SUPFAM" id="SSF69318">
    <property type="entry name" value="Integrin alpha N-terminal domain"/>
    <property type="match status" value="1"/>
</dbReference>
<dbReference type="SUPFAM" id="SSF50978">
    <property type="entry name" value="WD40 repeat-like"/>
    <property type="match status" value="1"/>
</dbReference>